<evidence type="ECO:0000255" key="1">
    <source>
        <dbReference type="HAMAP-Rule" id="MF_00456"/>
    </source>
</evidence>
<accession>B7M271</accession>
<organism>
    <name type="scientific">Escherichia coli O8 (strain IAI1)</name>
    <dbReference type="NCBI Taxonomy" id="585034"/>
    <lineage>
        <taxon>Bacteria</taxon>
        <taxon>Pseudomonadati</taxon>
        <taxon>Pseudomonadota</taxon>
        <taxon>Gammaproteobacteria</taxon>
        <taxon>Enterobacterales</taxon>
        <taxon>Enterobacteriaceae</taxon>
        <taxon>Escherichia</taxon>
    </lineage>
</organism>
<dbReference type="EC" id="2.7.2.11" evidence="1"/>
<dbReference type="EMBL" id="CU928160">
    <property type="protein sequence ID" value="CAQ97155.1"/>
    <property type="molecule type" value="Genomic_DNA"/>
</dbReference>
<dbReference type="RefSeq" id="WP_001285288.1">
    <property type="nucleotide sequence ID" value="NC_011741.1"/>
</dbReference>
<dbReference type="SMR" id="B7M271"/>
<dbReference type="GeneID" id="93777151"/>
<dbReference type="KEGG" id="ecr:ECIAI1_0281"/>
<dbReference type="HOGENOM" id="CLU_025400_2_0_6"/>
<dbReference type="UniPathway" id="UPA00098">
    <property type="reaction ID" value="UER00359"/>
</dbReference>
<dbReference type="GO" id="GO:0005829">
    <property type="term" value="C:cytosol"/>
    <property type="evidence" value="ECO:0007669"/>
    <property type="project" value="TreeGrafter"/>
</dbReference>
<dbReference type="GO" id="GO:0005524">
    <property type="term" value="F:ATP binding"/>
    <property type="evidence" value="ECO:0007669"/>
    <property type="project" value="UniProtKB-KW"/>
</dbReference>
<dbReference type="GO" id="GO:0004349">
    <property type="term" value="F:glutamate 5-kinase activity"/>
    <property type="evidence" value="ECO:0007669"/>
    <property type="project" value="UniProtKB-UniRule"/>
</dbReference>
<dbReference type="GO" id="GO:0003723">
    <property type="term" value="F:RNA binding"/>
    <property type="evidence" value="ECO:0007669"/>
    <property type="project" value="InterPro"/>
</dbReference>
<dbReference type="GO" id="GO:0055129">
    <property type="term" value="P:L-proline biosynthetic process"/>
    <property type="evidence" value="ECO:0007669"/>
    <property type="project" value="UniProtKB-UniRule"/>
</dbReference>
<dbReference type="CDD" id="cd04242">
    <property type="entry name" value="AAK_G5K_ProB"/>
    <property type="match status" value="1"/>
</dbReference>
<dbReference type="CDD" id="cd21157">
    <property type="entry name" value="PUA_G5K"/>
    <property type="match status" value="1"/>
</dbReference>
<dbReference type="FunFam" id="2.30.130.10:FF:000003">
    <property type="entry name" value="Glutamate 5-kinase"/>
    <property type="match status" value="1"/>
</dbReference>
<dbReference type="FunFam" id="3.40.1160.10:FF:000006">
    <property type="entry name" value="Glutamate 5-kinase"/>
    <property type="match status" value="1"/>
</dbReference>
<dbReference type="Gene3D" id="3.40.1160.10">
    <property type="entry name" value="Acetylglutamate kinase-like"/>
    <property type="match status" value="2"/>
</dbReference>
<dbReference type="Gene3D" id="2.30.130.10">
    <property type="entry name" value="PUA domain"/>
    <property type="match status" value="1"/>
</dbReference>
<dbReference type="HAMAP" id="MF_00456">
    <property type="entry name" value="ProB"/>
    <property type="match status" value="1"/>
</dbReference>
<dbReference type="InterPro" id="IPR036393">
    <property type="entry name" value="AceGlu_kinase-like_sf"/>
</dbReference>
<dbReference type="InterPro" id="IPR001048">
    <property type="entry name" value="Asp/Glu/Uridylate_kinase"/>
</dbReference>
<dbReference type="InterPro" id="IPR041739">
    <property type="entry name" value="G5K_ProB"/>
</dbReference>
<dbReference type="InterPro" id="IPR001057">
    <property type="entry name" value="Glu/AcGlu_kinase"/>
</dbReference>
<dbReference type="InterPro" id="IPR011529">
    <property type="entry name" value="Glu_5kinase"/>
</dbReference>
<dbReference type="InterPro" id="IPR005715">
    <property type="entry name" value="Glu_5kinase/COase_Synthase"/>
</dbReference>
<dbReference type="InterPro" id="IPR019797">
    <property type="entry name" value="Glutamate_5-kinase_CS"/>
</dbReference>
<dbReference type="InterPro" id="IPR002478">
    <property type="entry name" value="PUA"/>
</dbReference>
<dbReference type="InterPro" id="IPR015947">
    <property type="entry name" value="PUA-like_sf"/>
</dbReference>
<dbReference type="InterPro" id="IPR036974">
    <property type="entry name" value="PUA_sf"/>
</dbReference>
<dbReference type="NCBIfam" id="TIGR01027">
    <property type="entry name" value="proB"/>
    <property type="match status" value="1"/>
</dbReference>
<dbReference type="PANTHER" id="PTHR43654">
    <property type="entry name" value="GLUTAMATE 5-KINASE"/>
    <property type="match status" value="1"/>
</dbReference>
<dbReference type="PANTHER" id="PTHR43654:SF1">
    <property type="entry name" value="ISOPENTENYL PHOSPHATE KINASE"/>
    <property type="match status" value="1"/>
</dbReference>
<dbReference type="Pfam" id="PF00696">
    <property type="entry name" value="AA_kinase"/>
    <property type="match status" value="1"/>
</dbReference>
<dbReference type="Pfam" id="PF01472">
    <property type="entry name" value="PUA"/>
    <property type="match status" value="1"/>
</dbReference>
<dbReference type="PIRSF" id="PIRSF000729">
    <property type="entry name" value="GK"/>
    <property type="match status" value="1"/>
</dbReference>
<dbReference type="PRINTS" id="PR00474">
    <property type="entry name" value="GLU5KINASE"/>
</dbReference>
<dbReference type="SMART" id="SM00359">
    <property type="entry name" value="PUA"/>
    <property type="match status" value="1"/>
</dbReference>
<dbReference type="SUPFAM" id="SSF53633">
    <property type="entry name" value="Carbamate kinase-like"/>
    <property type="match status" value="1"/>
</dbReference>
<dbReference type="SUPFAM" id="SSF88697">
    <property type="entry name" value="PUA domain-like"/>
    <property type="match status" value="1"/>
</dbReference>
<dbReference type="PROSITE" id="PS00902">
    <property type="entry name" value="GLUTAMATE_5_KINASE"/>
    <property type="match status" value="1"/>
</dbReference>
<dbReference type="PROSITE" id="PS50890">
    <property type="entry name" value="PUA"/>
    <property type="match status" value="1"/>
</dbReference>
<proteinExistence type="inferred from homology"/>
<protein>
    <recommendedName>
        <fullName evidence="1">Glutamate 5-kinase</fullName>
        <ecNumber evidence="1">2.7.2.11</ecNumber>
    </recommendedName>
    <alternativeName>
        <fullName evidence="1">Gamma-glutamyl kinase</fullName>
        <shortName evidence="1">GK</shortName>
    </alternativeName>
</protein>
<name>PROB_ECO8A</name>
<feature type="chain" id="PRO_1000125231" description="Glutamate 5-kinase">
    <location>
        <begin position="1"/>
        <end position="367"/>
    </location>
</feature>
<feature type="domain" description="PUA" evidence="1">
    <location>
        <begin position="275"/>
        <end position="353"/>
    </location>
</feature>
<feature type="binding site" evidence="1">
    <location>
        <position position="10"/>
    </location>
    <ligand>
        <name>ATP</name>
        <dbReference type="ChEBI" id="CHEBI:30616"/>
    </ligand>
</feature>
<feature type="binding site" evidence="1">
    <location>
        <position position="50"/>
    </location>
    <ligand>
        <name>substrate</name>
    </ligand>
</feature>
<feature type="binding site" evidence="1">
    <location>
        <position position="137"/>
    </location>
    <ligand>
        <name>substrate</name>
    </ligand>
</feature>
<feature type="binding site" evidence="1">
    <location>
        <position position="149"/>
    </location>
    <ligand>
        <name>substrate</name>
    </ligand>
</feature>
<feature type="binding site" evidence="1">
    <location>
        <begin position="169"/>
        <end position="170"/>
    </location>
    <ligand>
        <name>ATP</name>
        <dbReference type="ChEBI" id="CHEBI:30616"/>
    </ligand>
</feature>
<feature type="binding site" evidence="1">
    <location>
        <begin position="211"/>
        <end position="217"/>
    </location>
    <ligand>
        <name>ATP</name>
        <dbReference type="ChEBI" id="CHEBI:30616"/>
    </ligand>
</feature>
<comment type="function">
    <text evidence="1">Catalyzes the transfer of a phosphate group to glutamate to form L-glutamate 5-phosphate.</text>
</comment>
<comment type="catalytic activity">
    <reaction evidence="1">
        <text>L-glutamate + ATP = L-glutamyl 5-phosphate + ADP</text>
        <dbReference type="Rhea" id="RHEA:14877"/>
        <dbReference type="ChEBI" id="CHEBI:29985"/>
        <dbReference type="ChEBI" id="CHEBI:30616"/>
        <dbReference type="ChEBI" id="CHEBI:58274"/>
        <dbReference type="ChEBI" id="CHEBI:456216"/>
        <dbReference type="EC" id="2.7.2.11"/>
    </reaction>
</comment>
<comment type="pathway">
    <text evidence="1">Amino-acid biosynthesis; L-proline biosynthesis; L-glutamate 5-semialdehyde from L-glutamate: step 1/2.</text>
</comment>
<comment type="subcellular location">
    <subcellularLocation>
        <location evidence="1">Cytoplasm</location>
    </subcellularLocation>
</comment>
<comment type="similarity">
    <text evidence="1">Belongs to the glutamate 5-kinase family.</text>
</comment>
<gene>
    <name evidence="1" type="primary">proB</name>
    <name type="ordered locus">ECIAI1_0281</name>
</gene>
<sequence>MSDSQTLVVKLGTSVLTGGSRRLNRAHIVELVRQCAQLHAAGHRIVIVTSGAIAAGREHLGYPELPATIASKQLLAAVGQSRLIQLWEQLFSIYGIHVGQMLLTRADMEDRERFLNARDTLRALLDNNIVPVINENDAVATAEIKVGDNDNLSALAAILAGADKLLLLTDQKGLYTADPRSNPQAELIKDVYGIDDALRAIAGDSVSGLGTGGMSTKLQAADVACRAGIDTIIAAGSKPGVIGDVMEGISVGTLFHAQATPLENRKRWIFGAPPAGEITVDEGATAAILERGSSLLPKGIKSVTGNFSRGEVIRICNLEGRDIAHGVSRYNSDALRRIAGHHSQEIDAILGYEYGPVAVHRDDMITR</sequence>
<reference key="1">
    <citation type="journal article" date="2009" name="PLoS Genet.">
        <title>Organised genome dynamics in the Escherichia coli species results in highly diverse adaptive paths.</title>
        <authorList>
            <person name="Touchon M."/>
            <person name="Hoede C."/>
            <person name="Tenaillon O."/>
            <person name="Barbe V."/>
            <person name="Baeriswyl S."/>
            <person name="Bidet P."/>
            <person name="Bingen E."/>
            <person name="Bonacorsi S."/>
            <person name="Bouchier C."/>
            <person name="Bouvet O."/>
            <person name="Calteau A."/>
            <person name="Chiapello H."/>
            <person name="Clermont O."/>
            <person name="Cruveiller S."/>
            <person name="Danchin A."/>
            <person name="Diard M."/>
            <person name="Dossat C."/>
            <person name="Karoui M.E."/>
            <person name="Frapy E."/>
            <person name="Garry L."/>
            <person name="Ghigo J.M."/>
            <person name="Gilles A.M."/>
            <person name="Johnson J."/>
            <person name="Le Bouguenec C."/>
            <person name="Lescat M."/>
            <person name="Mangenot S."/>
            <person name="Martinez-Jehanne V."/>
            <person name="Matic I."/>
            <person name="Nassif X."/>
            <person name="Oztas S."/>
            <person name="Petit M.A."/>
            <person name="Pichon C."/>
            <person name="Rouy Z."/>
            <person name="Ruf C.S."/>
            <person name="Schneider D."/>
            <person name="Tourret J."/>
            <person name="Vacherie B."/>
            <person name="Vallenet D."/>
            <person name="Medigue C."/>
            <person name="Rocha E.P.C."/>
            <person name="Denamur E."/>
        </authorList>
    </citation>
    <scope>NUCLEOTIDE SEQUENCE [LARGE SCALE GENOMIC DNA]</scope>
    <source>
        <strain>IAI1</strain>
    </source>
</reference>
<keyword id="KW-0028">Amino-acid biosynthesis</keyword>
<keyword id="KW-0067">ATP-binding</keyword>
<keyword id="KW-0963">Cytoplasm</keyword>
<keyword id="KW-0418">Kinase</keyword>
<keyword id="KW-0547">Nucleotide-binding</keyword>
<keyword id="KW-0641">Proline biosynthesis</keyword>
<keyword id="KW-0808">Transferase</keyword>